<comment type="function">
    <text evidence="2 3">Growth factor that controls proliferation and cellular differentiation in the retina and bone formation. Plays a key role in regulating apoptosis during retinal development. Establishes dorsal-ventral positional information in the retina and controls the formation of the retinotectal map. Required for normal formation of bones and joints in the limbs, skull, digits and axial skeleton. Plays a key role in establishing boundaries between skeletal elements during development. Regulation of GDF6 expression seems to be a mechanism for evolving species-specific changes in skeletal structures. Seems to positively regulate differentiation of chondrogenic tissue through the growth factor receptors subunits BMPR1A, BMPR1B, BMPR2 and ACVR2A, leading to the activation of SMAD1-SMAD5-SMAD8 complex. The regulation of chondrogenic differentiation is inhibited by NOG. Also involved in the induction of adipogenesis from mesenchymal stem cells. This mechanism acts through the growth factor receptors subunits BMPR1A, BMPR2 and ACVR2A and the activation of SMAD1-SMAD5-SMAD8 complex and MAPK14/p38.</text>
</comment>
<comment type="subunit">
    <text evidence="1">Homodimer; disulfide-linked.</text>
</comment>
<comment type="subcellular location">
    <subcellularLocation>
        <location evidence="3">Secreted</location>
    </subcellularLocation>
</comment>
<comment type="similarity">
    <text evidence="6">Belongs to the TGF-beta family.</text>
</comment>
<comment type="sequence caution" evidence="6">
    <conflict type="miscellaneous discrepancy">
        <sequence resource="EMBL-CDS" id="AAA61416"/>
    </conflict>
    <text>Several sequencing errors.</text>
</comment>
<reference key="1">
    <citation type="journal article" date="2009" name="Genome Biol.">
        <title>A whole-genome assembly of the domestic cow, Bos taurus.</title>
        <authorList>
            <person name="Zimin A.V."/>
            <person name="Delcher A.L."/>
            <person name="Florea L."/>
            <person name="Kelley D.R."/>
            <person name="Schatz M.C."/>
            <person name="Puiu D."/>
            <person name="Hanrahan F."/>
            <person name="Pertea G."/>
            <person name="Van Tassell C.P."/>
            <person name="Sonstegard T.S."/>
            <person name="Marcais G."/>
            <person name="Roberts M."/>
            <person name="Subramanian P."/>
            <person name="Yorke J.A."/>
            <person name="Salzberg S.L."/>
        </authorList>
    </citation>
    <scope>NUCLEOTIDE SEQUENCE [LARGE SCALE GENOMIC DNA]</scope>
    <source>
        <strain>Hereford</strain>
    </source>
</reference>
<reference key="2">
    <citation type="journal article" date="1994" name="J. Biol. Chem.">
        <title>Cartilage-derived morphogenetic proteins. New members of the transforming growth factor-beta superfamily predominantly expressed in long bones during human embryonic development.</title>
        <authorList>
            <person name="Chang S."/>
            <person name="Hoang B."/>
            <person name="Thomas J.T."/>
            <person name="Vukicevic S."/>
            <person name="Luyten F.P."/>
            <person name="Ryba N.J.P."/>
            <person name="Kozak C.A."/>
            <person name="Reddi A.H."/>
            <person name="Moos M."/>
        </authorList>
    </citation>
    <scope>NUCLEOTIDE SEQUENCE [MRNA] OF 32-470</scope>
    <source>
        <tissue>Articular cartilage</tissue>
    </source>
</reference>
<sequence length="470" mass="52112">MDTSRVLLSAVFLISFLWDLPGFQQASISSSSSSAELGSAKGMRSRKEGRMPRAPRENATAREPLDRQEPPPRPQEEPQRRPPQQPEAREPPGRGPRVVPHEYMLSIYRTYSIAEKLGINASFFQSSKSANTITSFVDRGLDDLSHTPLRRQKYLFDVSTLSDKEELVGAELRLFRQAPAAPWGPPAGPLRLQLFACQSPLLLEARSLDPQGAPRPGWEVFDVWRGLRPQPWKQLCLELRAAWGGEPGAAEDEARAPGPQQPPPPDLRSLGFGRRVRTPQERALLVVFSRSQRKTLFAEMREQLGSATEVVGPGGGAEGSGPPPPPPPPPPSGTPDAGLWSPSPGRRRRRTAFASRHGKRHGKKSRLRCSKKPLHVNFKELGWDDWIIAPLEYEAYHCEGVCDFPLRSHLEPTNHAIIQTLMNSMDPGSTPPSCCVPTKLTPISILYIDAGNNVVYKQYEEMVVESCGCR</sequence>
<evidence type="ECO:0000250" key="1">
    <source>
        <dbReference type="UniProtKB" id="P39905"/>
    </source>
</evidence>
<evidence type="ECO:0000250" key="2">
    <source>
        <dbReference type="UniProtKB" id="P43028"/>
    </source>
</evidence>
<evidence type="ECO:0000250" key="3">
    <source>
        <dbReference type="UniProtKB" id="Q6KF10"/>
    </source>
</evidence>
<evidence type="ECO:0000255" key="4"/>
<evidence type="ECO:0000256" key="5">
    <source>
        <dbReference type="SAM" id="MobiDB-lite"/>
    </source>
</evidence>
<evidence type="ECO:0000305" key="6"/>
<feature type="signal peptide" evidence="4">
    <location>
        <begin position="1"/>
        <end position="22"/>
    </location>
</feature>
<feature type="propeptide" id="PRO_0000425155" evidence="4">
    <location>
        <begin position="23"/>
        <end position="350"/>
    </location>
</feature>
<feature type="chain" id="PRO_0000425156" description="Growth/differentiation factor 6">
    <location>
        <begin position="351"/>
        <end position="470"/>
    </location>
</feature>
<feature type="region of interest" description="Disordered" evidence="5">
    <location>
        <begin position="28"/>
        <end position="98"/>
    </location>
</feature>
<feature type="region of interest" description="Disordered" evidence="5">
    <location>
        <begin position="247"/>
        <end position="272"/>
    </location>
</feature>
<feature type="region of interest" description="Disordered" evidence="5">
    <location>
        <begin position="308"/>
        <end position="366"/>
    </location>
</feature>
<feature type="compositionally biased region" description="Basic and acidic residues" evidence="5">
    <location>
        <begin position="45"/>
        <end position="80"/>
    </location>
</feature>
<feature type="compositionally biased region" description="Pro residues" evidence="5">
    <location>
        <begin position="321"/>
        <end position="333"/>
    </location>
</feature>
<feature type="compositionally biased region" description="Basic residues" evidence="5">
    <location>
        <begin position="345"/>
        <end position="366"/>
    </location>
</feature>
<feature type="glycosylation site" description="N-linked (GlcNAc...) asparagine" evidence="4">
    <location>
        <position position="120"/>
    </location>
</feature>
<feature type="disulfide bond" evidence="1">
    <location>
        <begin position="369"/>
        <end position="435"/>
    </location>
</feature>
<feature type="disulfide bond" evidence="1">
    <location>
        <begin position="398"/>
        <end position="467"/>
    </location>
</feature>
<feature type="disulfide bond" evidence="1">
    <location>
        <begin position="402"/>
        <end position="469"/>
    </location>
</feature>
<feature type="disulfide bond" description="Interchain" evidence="1">
    <location>
        <position position="434"/>
    </location>
</feature>
<name>GDF6_BOVIN</name>
<keyword id="KW-0053">Apoptosis</keyword>
<keyword id="KW-0165">Cleavage on pair of basic residues</keyword>
<keyword id="KW-0202">Cytokine</keyword>
<keyword id="KW-0217">Developmental protein</keyword>
<keyword id="KW-1015">Disulfide bond</keyword>
<keyword id="KW-0325">Glycoprotein</keyword>
<keyword id="KW-0339">Growth factor</keyword>
<keyword id="KW-1185">Reference proteome</keyword>
<keyword id="KW-0964">Secreted</keyword>
<keyword id="KW-0732">Signal</keyword>
<protein>
    <recommendedName>
        <fullName>Growth/differentiation factor 6</fullName>
        <shortName>GDF-6</shortName>
    </recommendedName>
    <alternativeName>
        <fullName>Bone morphogenetic protein 13</fullName>
        <shortName>BMP-13</shortName>
    </alternativeName>
    <alternativeName>
        <fullName>Cartilage-derived morphogenetic protein 2</fullName>
        <shortName>CDMP-2</shortName>
    </alternativeName>
</protein>
<dbReference type="EMBL" id="DAAA02039445">
    <property type="status" value="NOT_ANNOTATED_CDS"/>
    <property type="molecule type" value="Genomic_DNA"/>
</dbReference>
<dbReference type="EMBL" id="U13661">
    <property type="protein sequence ID" value="AAA61416.1"/>
    <property type="status" value="ALT_SEQ"/>
    <property type="molecule type" value="mRNA"/>
</dbReference>
<dbReference type="PIR" id="B55452">
    <property type="entry name" value="B55452"/>
</dbReference>
<dbReference type="SMR" id="P55106"/>
<dbReference type="FunCoup" id="P55106">
    <property type="interactions" value="94"/>
</dbReference>
<dbReference type="STRING" id="9913.ENSBTAP00000043329"/>
<dbReference type="GlyCosmos" id="P55106">
    <property type="glycosylation" value="1 site, No reported glycans"/>
</dbReference>
<dbReference type="GlyGen" id="P55106">
    <property type="glycosylation" value="1 site"/>
</dbReference>
<dbReference type="PaxDb" id="9913-ENSBTAP00000043329"/>
<dbReference type="eggNOG" id="KOG3900">
    <property type="taxonomic scope" value="Eukaryota"/>
</dbReference>
<dbReference type="HOGENOM" id="CLU_020515_0_0_1"/>
<dbReference type="InParanoid" id="P55106"/>
<dbReference type="OrthoDB" id="5987191at2759"/>
<dbReference type="TreeFam" id="TF316134"/>
<dbReference type="Proteomes" id="UP000009136">
    <property type="component" value="Unplaced"/>
</dbReference>
<dbReference type="GO" id="GO:0005615">
    <property type="term" value="C:extracellular space"/>
    <property type="evidence" value="ECO:0000318"/>
    <property type="project" value="GO_Central"/>
</dbReference>
<dbReference type="GO" id="GO:0005125">
    <property type="term" value="F:cytokine activity"/>
    <property type="evidence" value="ECO:0000318"/>
    <property type="project" value="GO_Central"/>
</dbReference>
<dbReference type="GO" id="GO:0008083">
    <property type="term" value="F:growth factor activity"/>
    <property type="evidence" value="ECO:0007669"/>
    <property type="project" value="UniProtKB-KW"/>
</dbReference>
<dbReference type="GO" id="GO:0006915">
    <property type="term" value="P:apoptotic process"/>
    <property type="evidence" value="ECO:0007669"/>
    <property type="project" value="UniProtKB-KW"/>
</dbReference>
<dbReference type="GO" id="GO:0030509">
    <property type="term" value="P:BMP signaling pathway"/>
    <property type="evidence" value="ECO:0000250"/>
    <property type="project" value="UniProtKB"/>
</dbReference>
<dbReference type="GO" id="GO:0045444">
    <property type="term" value="P:fat cell differentiation"/>
    <property type="evidence" value="ECO:0000250"/>
    <property type="project" value="UniProtKB"/>
</dbReference>
<dbReference type="GO" id="GO:0032332">
    <property type="term" value="P:positive regulation of chondrocyte differentiation"/>
    <property type="evidence" value="ECO:0000250"/>
    <property type="project" value="UniProtKB"/>
</dbReference>
<dbReference type="GO" id="GO:1900745">
    <property type="term" value="P:positive regulation of p38MAPK cascade"/>
    <property type="evidence" value="ECO:0000250"/>
    <property type="project" value="UniProtKB"/>
</dbReference>
<dbReference type="GO" id="GO:0060391">
    <property type="term" value="P:positive regulation of SMAD protein signal transduction"/>
    <property type="evidence" value="ECO:0000250"/>
    <property type="project" value="UniProtKB"/>
</dbReference>
<dbReference type="CDD" id="cd13766">
    <property type="entry name" value="TGF_beta_GDF5_6_7"/>
    <property type="match status" value="1"/>
</dbReference>
<dbReference type="FunFam" id="2.10.90.10:FF:000001">
    <property type="entry name" value="Bone morphogenetic protein 4"/>
    <property type="match status" value="1"/>
</dbReference>
<dbReference type="FunFam" id="2.60.120.970:FF:000026">
    <property type="entry name" value="Growth differentiation factor 6"/>
    <property type="match status" value="1"/>
</dbReference>
<dbReference type="Gene3D" id="2.60.120.970">
    <property type="match status" value="1"/>
</dbReference>
<dbReference type="Gene3D" id="2.10.90.10">
    <property type="entry name" value="Cystine-knot cytokines"/>
    <property type="match status" value="1"/>
</dbReference>
<dbReference type="InterPro" id="IPR029034">
    <property type="entry name" value="Cystine-knot_cytokine"/>
</dbReference>
<dbReference type="InterPro" id="IPR001839">
    <property type="entry name" value="TGF-b_C"/>
</dbReference>
<dbReference type="InterPro" id="IPR001111">
    <property type="entry name" value="TGF-b_propeptide"/>
</dbReference>
<dbReference type="InterPro" id="IPR015615">
    <property type="entry name" value="TGF-beta-rel"/>
</dbReference>
<dbReference type="InterPro" id="IPR017948">
    <property type="entry name" value="TGFb_CS"/>
</dbReference>
<dbReference type="PANTHER" id="PTHR11848:SF43">
    <property type="entry name" value="GROWTH_DIFFERENTIATION FACTOR 6"/>
    <property type="match status" value="1"/>
</dbReference>
<dbReference type="PANTHER" id="PTHR11848">
    <property type="entry name" value="TGF-BETA FAMILY"/>
    <property type="match status" value="1"/>
</dbReference>
<dbReference type="Pfam" id="PF00019">
    <property type="entry name" value="TGF_beta"/>
    <property type="match status" value="1"/>
</dbReference>
<dbReference type="Pfam" id="PF00688">
    <property type="entry name" value="TGFb_propeptide"/>
    <property type="match status" value="1"/>
</dbReference>
<dbReference type="SMART" id="SM00204">
    <property type="entry name" value="TGFB"/>
    <property type="match status" value="1"/>
</dbReference>
<dbReference type="SUPFAM" id="SSF57501">
    <property type="entry name" value="Cystine-knot cytokines"/>
    <property type="match status" value="1"/>
</dbReference>
<dbReference type="PROSITE" id="PS00250">
    <property type="entry name" value="TGF_BETA_1"/>
    <property type="match status" value="1"/>
</dbReference>
<dbReference type="PROSITE" id="PS51362">
    <property type="entry name" value="TGF_BETA_2"/>
    <property type="match status" value="1"/>
</dbReference>
<gene>
    <name type="primary">GDF6</name>
    <name type="synonym">BMP13</name>
    <name type="synonym">CDMP2</name>
</gene>
<organism>
    <name type="scientific">Bos taurus</name>
    <name type="common">Bovine</name>
    <dbReference type="NCBI Taxonomy" id="9913"/>
    <lineage>
        <taxon>Eukaryota</taxon>
        <taxon>Metazoa</taxon>
        <taxon>Chordata</taxon>
        <taxon>Craniata</taxon>
        <taxon>Vertebrata</taxon>
        <taxon>Euteleostomi</taxon>
        <taxon>Mammalia</taxon>
        <taxon>Eutheria</taxon>
        <taxon>Laurasiatheria</taxon>
        <taxon>Artiodactyla</taxon>
        <taxon>Ruminantia</taxon>
        <taxon>Pecora</taxon>
        <taxon>Bovidae</taxon>
        <taxon>Bovinae</taxon>
        <taxon>Bos</taxon>
    </lineage>
</organism>
<accession>P55106</accession>
<accession>F1MD30</accession>
<proteinExistence type="evidence at transcript level"/>